<dbReference type="EMBL" id="AE017221">
    <property type="protein sequence ID" value="AAS81249.1"/>
    <property type="molecule type" value="Genomic_DNA"/>
</dbReference>
<dbReference type="RefSeq" id="WP_011173332.1">
    <property type="nucleotide sequence ID" value="NC_005835.1"/>
</dbReference>
<dbReference type="EMDB" id="EMD-8016"/>
<dbReference type="EMDB" id="EMD-8017"/>
<dbReference type="EMDB" id="EMD-8462"/>
<dbReference type="SMR" id="Q72J74"/>
<dbReference type="GeneID" id="3168073"/>
<dbReference type="KEGG" id="tth:TT_C0905"/>
<dbReference type="eggNOG" id="COG1394">
    <property type="taxonomic scope" value="Bacteria"/>
</dbReference>
<dbReference type="HOGENOM" id="CLU_069688_2_1_0"/>
<dbReference type="OrthoDB" id="9781718at2"/>
<dbReference type="Proteomes" id="UP000000592">
    <property type="component" value="Chromosome"/>
</dbReference>
<dbReference type="GO" id="GO:0005524">
    <property type="term" value="F:ATP binding"/>
    <property type="evidence" value="ECO:0007669"/>
    <property type="project" value="UniProtKB-UniRule"/>
</dbReference>
<dbReference type="GO" id="GO:0046933">
    <property type="term" value="F:proton-transporting ATP synthase activity, rotational mechanism"/>
    <property type="evidence" value="ECO:0007669"/>
    <property type="project" value="UniProtKB-UniRule"/>
</dbReference>
<dbReference type="GO" id="GO:0046961">
    <property type="term" value="F:proton-transporting ATPase activity, rotational mechanism"/>
    <property type="evidence" value="ECO:0007669"/>
    <property type="project" value="InterPro"/>
</dbReference>
<dbReference type="GO" id="GO:0042777">
    <property type="term" value="P:proton motive force-driven plasma membrane ATP synthesis"/>
    <property type="evidence" value="ECO:0007669"/>
    <property type="project" value="UniProtKB-UniRule"/>
</dbReference>
<dbReference type="Gene3D" id="1.10.287.3240">
    <property type="match status" value="1"/>
</dbReference>
<dbReference type="HAMAP" id="MF_00271">
    <property type="entry name" value="ATP_synth_D_arch"/>
    <property type="match status" value="1"/>
</dbReference>
<dbReference type="InterPro" id="IPR002699">
    <property type="entry name" value="V_ATPase_D"/>
</dbReference>
<dbReference type="NCBIfam" id="TIGR00309">
    <property type="entry name" value="V_ATPase_subD"/>
    <property type="match status" value="1"/>
</dbReference>
<dbReference type="PANTHER" id="PTHR11671">
    <property type="entry name" value="V-TYPE ATP SYNTHASE SUBUNIT D"/>
    <property type="match status" value="1"/>
</dbReference>
<dbReference type="Pfam" id="PF01813">
    <property type="entry name" value="ATP-synt_D"/>
    <property type="match status" value="1"/>
</dbReference>
<protein>
    <recommendedName>
        <fullName evidence="1">V-type ATP synthase subunit D</fullName>
    </recommendedName>
    <alternativeName>
        <fullName evidence="1">V-ATPase subunit D</fullName>
    </alternativeName>
</protein>
<sequence length="223" mass="24678">MSQVSPTRMNLLQRRGQLRLAQKGVDLLKKKRDALVAEFFGLVREAMEARKALDQAAKEAYAALLLAQAFDGPEVVAGAALGVPPLEGVEAEVENVWGSKVPRLKATFPDGALLSPVGTPAYTLEASRAFRRYAEALIRVANTETRLKKIGEEIKKTTRRVNALEQVVIPGIRAQIRFIQQVLEQREREDTFRLKRIKGKIEAREAEEEGGRPNPQVEIGAGL</sequence>
<evidence type="ECO:0000255" key="1">
    <source>
        <dbReference type="HAMAP-Rule" id="MF_00271"/>
    </source>
</evidence>
<evidence type="ECO:0000256" key="2">
    <source>
        <dbReference type="SAM" id="MobiDB-lite"/>
    </source>
</evidence>
<name>VATD_THET2</name>
<comment type="function">
    <text evidence="1">Produces ATP from ADP in the presence of a proton gradient across the membrane.</text>
</comment>
<comment type="similarity">
    <text evidence="1">Belongs to the V-ATPase D subunit family.</text>
</comment>
<accession>Q72J74</accession>
<proteinExistence type="inferred from homology"/>
<organism>
    <name type="scientific">Thermus thermophilus (strain ATCC BAA-163 / DSM 7039 / HB27)</name>
    <dbReference type="NCBI Taxonomy" id="262724"/>
    <lineage>
        <taxon>Bacteria</taxon>
        <taxon>Thermotogati</taxon>
        <taxon>Deinococcota</taxon>
        <taxon>Deinococci</taxon>
        <taxon>Thermales</taxon>
        <taxon>Thermaceae</taxon>
        <taxon>Thermus</taxon>
    </lineage>
</organism>
<gene>
    <name evidence="1" type="primary">atpD</name>
    <name type="ordered locus">TT_C0905</name>
</gene>
<keyword id="KW-0066">ATP synthesis</keyword>
<keyword id="KW-0375">Hydrogen ion transport</keyword>
<keyword id="KW-0406">Ion transport</keyword>
<keyword id="KW-0813">Transport</keyword>
<reference key="1">
    <citation type="journal article" date="2004" name="Nat. Biotechnol.">
        <title>The genome sequence of the extreme thermophile Thermus thermophilus.</title>
        <authorList>
            <person name="Henne A."/>
            <person name="Brueggemann H."/>
            <person name="Raasch C."/>
            <person name="Wiezer A."/>
            <person name="Hartsch T."/>
            <person name="Liesegang H."/>
            <person name="Johann A."/>
            <person name="Lienard T."/>
            <person name="Gohl O."/>
            <person name="Martinez-Arias R."/>
            <person name="Jacobi C."/>
            <person name="Starkuviene V."/>
            <person name="Schlenczeck S."/>
            <person name="Dencker S."/>
            <person name="Huber R."/>
            <person name="Klenk H.-P."/>
            <person name="Kramer W."/>
            <person name="Merkl R."/>
            <person name="Gottschalk G."/>
            <person name="Fritz H.-J."/>
        </authorList>
    </citation>
    <scope>NUCLEOTIDE SEQUENCE [LARGE SCALE GENOMIC DNA]</scope>
    <source>
        <strain>ATCC BAA-163 / DSM 7039 / HB27</strain>
    </source>
</reference>
<feature type="chain" id="PRO_1000059174" description="V-type ATP synthase subunit D">
    <location>
        <begin position="1"/>
        <end position="223"/>
    </location>
</feature>
<feature type="region of interest" description="Disordered" evidence="2">
    <location>
        <begin position="203"/>
        <end position="223"/>
    </location>
</feature>